<protein>
    <recommendedName>
        <fullName evidence="1">Small ribosomal subunit protein uS9</fullName>
    </recommendedName>
    <alternativeName>
        <fullName evidence="3">30S ribosomal protein S9</fullName>
    </alternativeName>
</protein>
<accession>C1CPG8</accession>
<organism>
    <name type="scientific">Streptococcus pneumoniae (strain Taiwan19F-14)</name>
    <dbReference type="NCBI Taxonomy" id="487213"/>
    <lineage>
        <taxon>Bacteria</taxon>
        <taxon>Bacillati</taxon>
        <taxon>Bacillota</taxon>
        <taxon>Bacilli</taxon>
        <taxon>Lactobacillales</taxon>
        <taxon>Streptococcaceae</taxon>
        <taxon>Streptococcus</taxon>
    </lineage>
</organism>
<keyword id="KW-0687">Ribonucleoprotein</keyword>
<keyword id="KW-0689">Ribosomal protein</keyword>
<dbReference type="EMBL" id="CP000921">
    <property type="protein sequence ID" value="ACO23029.1"/>
    <property type="molecule type" value="Genomic_DNA"/>
</dbReference>
<dbReference type="RefSeq" id="WP_000075966.1">
    <property type="nucleotide sequence ID" value="NC_012469.1"/>
</dbReference>
<dbReference type="SMR" id="C1CPG8"/>
<dbReference type="KEGG" id="snt:SPT_0341"/>
<dbReference type="HOGENOM" id="CLU_046483_2_1_9"/>
<dbReference type="GO" id="GO:0022627">
    <property type="term" value="C:cytosolic small ribosomal subunit"/>
    <property type="evidence" value="ECO:0007669"/>
    <property type="project" value="TreeGrafter"/>
</dbReference>
<dbReference type="GO" id="GO:0003723">
    <property type="term" value="F:RNA binding"/>
    <property type="evidence" value="ECO:0007669"/>
    <property type="project" value="TreeGrafter"/>
</dbReference>
<dbReference type="GO" id="GO:0003735">
    <property type="term" value="F:structural constituent of ribosome"/>
    <property type="evidence" value="ECO:0007669"/>
    <property type="project" value="InterPro"/>
</dbReference>
<dbReference type="GO" id="GO:0006412">
    <property type="term" value="P:translation"/>
    <property type="evidence" value="ECO:0007669"/>
    <property type="project" value="UniProtKB-UniRule"/>
</dbReference>
<dbReference type="FunFam" id="3.30.230.10:FF:000001">
    <property type="entry name" value="30S ribosomal protein S9"/>
    <property type="match status" value="1"/>
</dbReference>
<dbReference type="Gene3D" id="3.30.230.10">
    <property type="match status" value="1"/>
</dbReference>
<dbReference type="HAMAP" id="MF_00532_B">
    <property type="entry name" value="Ribosomal_uS9_B"/>
    <property type="match status" value="1"/>
</dbReference>
<dbReference type="InterPro" id="IPR020568">
    <property type="entry name" value="Ribosomal_Su5_D2-typ_SF"/>
</dbReference>
<dbReference type="InterPro" id="IPR000754">
    <property type="entry name" value="Ribosomal_uS9"/>
</dbReference>
<dbReference type="InterPro" id="IPR023035">
    <property type="entry name" value="Ribosomal_uS9_bac/plastid"/>
</dbReference>
<dbReference type="InterPro" id="IPR020574">
    <property type="entry name" value="Ribosomal_uS9_CS"/>
</dbReference>
<dbReference type="InterPro" id="IPR014721">
    <property type="entry name" value="Ribsml_uS5_D2-typ_fold_subgr"/>
</dbReference>
<dbReference type="NCBIfam" id="NF001099">
    <property type="entry name" value="PRK00132.1"/>
    <property type="match status" value="1"/>
</dbReference>
<dbReference type="PANTHER" id="PTHR21569">
    <property type="entry name" value="RIBOSOMAL PROTEIN S9"/>
    <property type="match status" value="1"/>
</dbReference>
<dbReference type="PANTHER" id="PTHR21569:SF1">
    <property type="entry name" value="SMALL RIBOSOMAL SUBUNIT PROTEIN US9M"/>
    <property type="match status" value="1"/>
</dbReference>
<dbReference type="Pfam" id="PF00380">
    <property type="entry name" value="Ribosomal_S9"/>
    <property type="match status" value="1"/>
</dbReference>
<dbReference type="SUPFAM" id="SSF54211">
    <property type="entry name" value="Ribosomal protein S5 domain 2-like"/>
    <property type="match status" value="1"/>
</dbReference>
<dbReference type="PROSITE" id="PS00360">
    <property type="entry name" value="RIBOSOMAL_S9"/>
    <property type="match status" value="1"/>
</dbReference>
<sequence>MSQAQYAGTGRRKNAVARVRLVPGTGKITVNKKDVEEYIPHADLRLVINQPFAVTSTVGSYDVFVNVIGGGYAGQSGAIRHGIARALLQVDPDFRDSLKRAGLLTRDSRKVERKKPGLKKARKASQFSKR</sequence>
<evidence type="ECO:0000255" key="1">
    <source>
        <dbReference type="HAMAP-Rule" id="MF_00532"/>
    </source>
</evidence>
<evidence type="ECO:0000256" key="2">
    <source>
        <dbReference type="SAM" id="MobiDB-lite"/>
    </source>
</evidence>
<evidence type="ECO:0000305" key="3"/>
<gene>
    <name evidence="1" type="primary">rpsI</name>
    <name type="ordered locus">SPT_0341</name>
</gene>
<comment type="similarity">
    <text evidence="1">Belongs to the universal ribosomal protein uS9 family.</text>
</comment>
<feature type="chain" id="PRO_1000146476" description="Small ribosomal subunit protein uS9">
    <location>
        <begin position="1"/>
        <end position="130"/>
    </location>
</feature>
<feature type="region of interest" description="Disordered" evidence="2">
    <location>
        <begin position="106"/>
        <end position="130"/>
    </location>
</feature>
<feature type="compositionally biased region" description="Basic residues" evidence="2">
    <location>
        <begin position="111"/>
        <end position="130"/>
    </location>
</feature>
<name>RS9_STRZT</name>
<proteinExistence type="inferred from homology"/>
<reference key="1">
    <citation type="journal article" date="2010" name="Genome Biol.">
        <title>Structure and dynamics of the pan-genome of Streptococcus pneumoniae and closely related species.</title>
        <authorList>
            <person name="Donati C."/>
            <person name="Hiller N.L."/>
            <person name="Tettelin H."/>
            <person name="Muzzi A."/>
            <person name="Croucher N.J."/>
            <person name="Angiuoli S.V."/>
            <person name="Oggioni M."/>
            <person name="Dunning Hotopp J.C."/>
            <person name="Hu F.Z."/>
            <person name="Riley D.R."/>
            <person name="Covacci A."/>
            <person name="Mitchell T.J."/>
            <person name="Bentley S.D."/>
            <person name="Kilian M."/>
            <person name="Ehrlich G.D."/>
            <person name="Rappuoli R."/>
            <person name="Moxon E.R."/>
            <person name="Masignani V."/>
        </authorList>
    </citation>
    <scope>NUCLEOTIDE SEQUENCE [LARGE SCALE GENOMIC DNA]</scope>
    <source>
        <strain>Taiwan19F-14</strain>
    </source>
</reference>